<feature type="chain" id="PRO_0000188182" description="ATP synthase epsilon chain">
    <location>
        <begin position="1"/>
        <end position="139"/>
    </location>
</feature>
<protein>
    <recommendedName>
        <fullName evidence="1">ATP synthase epsilon chain</fullName>
    </recommendedName>
    <alternativeName>
        <fullName evidence="1">ATP synthase F1 sector epsilon subunit</fullName>
    </alternativeName>
    <alternativeName>
        <fullName evidence="1">F-ATPase epsilon subunit</fullName>
    </alternativeName>
</protein>
<sequence>MTVHCDIVSAEGEIFSGLVEMVIAHGNLGDIGIAPGHAPLITDLKPGPIRLIKQGGEAEVFYISGGFLEVQPNMVKVLADTVQRAADLDEASAQAAVKAAEKALNEKGADFDYGSATARLAEAAAQLRTVQQIRKKFGG</sequence>
<dbReference type="EMBL" id="AE016853">
    <property type="protein sequence ID" value="AAO59011.1"/>
    <property type="molecule type" value="Genomic_DNA"/>
</dbReference>
<dbReference type="RefSeq" id="NP_795316.1">
    <property type="nucleotide sequence ID" value="NC_004578.1"/>
</dbReference>
<dbReference type="SMR" id="Q87TT5"/>
<dbReference type="STRING" id="223283.PSPTO_5598"/>
<dbReference type="KEGG" id="pst:PSPTO_5598"/>
<dbReference type="PATRIC" id="fig|223283.9.peg.5735"/>
<dbReference type="eggNOG" id="COG0355">
    <property type="taxonomic scope" value="Bacteria"/>
</dbReference>
<dbReference type="HOGENOM" id="CLU_084338_2_0_6"/>
<dbReference type="OrthoDB" id="9791445at2"/>
<dbReference type="PhylomeDB" id="Q87TT5"/>
<dbReference type="Proteomes" id="UP000002515">
    <property type="component" value="Chromosome"/>
</dbReference>
<dbReference type="GO" id="GO:0005886">
    <property type="term" value="C:plasma membrane"/>
    <property type="evidence" value="ECO:0007669"/>
    <property type="project" value="UniProtKB-SubCell"/>
</dbReference>
<dbReference type="GO" id="GO:0045259">
    <property type="term" value="C:proton-transporting ATP synthase complex"/>
    <property type="evidence" value="ECO:0007669"/>
    <property type="project" value="UniProtKB-KW"/>
</dbReference>
<dbReference type="GO" id="GO:0005524">
    <property type="term" value="F:ATP binding"/>
    <property type="evidence" value="ECO:0007669"/>
    <property type="project" value="UniProtKB-UniRule"/>
</dbReference>
<dbReference type="GO" id="GO:0046933">
    <property type="term" value="F:proton-transporting ATP synthase activity, rotational mechanism"/>
    <property type="evidence" value="ECO:0007669"/>
    <property type="project" value="UniProtKB-UniRule"/>
</dbReference>
<dbReference type="CDD" id="cd12152">
    <property type="entry name" value="F1-ATPase_delta"/>
    <property type="match status" value="1"/>
</dbReference>
<dbReference type="FunFam" id="2.60.15.10:FF:000001">
    <property type="entry name" value="ATP synthase epsilon chain"/>
    <property type="match status" value="1"/>
</dbReference>
<dbReference type="Gene3D" id="1.20.5.440">
    <property type="entry name" value="ATP synthase delta/epsilon subunit, C-terminal domain"/>
    <property type="match status" value="1"/>
</dbReference>
<dbReference type="Gene3D" id="2.60.15.10">
    <property type="entry name" value="F0F1 ATP synthase delta/epsilon subunit, N-terminal"/>
    <property type="match status" value="1"/>
</dbReference>
<dbReference type="HAMAP" id="MF_00530">
    <property type="entry name" value="ATP_synth_epsil_bac"/>
    <property type="match status" value="1"/>
</dbReference>
<dbReference type="InterPro" id="IPR036794">
    <property type="entry name" value="ATP_F1_dsu/esu_C_sf"/>
</dbReference>
<dbReference type="InterPro" id="IPR001469">
    <property type="entry name" value="ATP_synth_F1_dsu/esu"/>
</dbReference>
<dbReference type="InterPro" id="IPR020546">
    <property type="entry name" value="ATP_synth_F1_dsu/esu_N"/>
</dbReference>
<dbReference type="InterPro" id="IPR020547">
    <property type="entry name" value="ATP_synth_F1_esu_C"/>
</dbReference>
<dbReference type="InterPro" id="IPR036771">
    <property type="entry name" value="ATPsynth_dsu/esu_N"/>
</dbReference>
<dbReference type="NCBIfam" id="TIGR01216">
    <property type="entry name" value="ATP_synt_epsi"/>
    <property type="match status" value="1"/>
</dbReference>
<dbReference type="NCBIfam" id="NF001847">
    <property type="entry name" value="PRK00571.1-4"/>
    <property type="match status" value="1"/>
</dbReference>
<dbReference type="PANTHER" id="PTHR13822">
    <property type="entry name" value="ATP SYNTHASE DELTA/EPSILON CHAIN"/>
    <property type="match status" value="1"/>
</dbReference>
<dbReference type="PANTHER" id="PTHR13822:SF10">
    <property type="entry name" value="ATP SYNTHASE EPSILON CHAIN, CHLOROPLASTIC"/>
    <property type="match status" value="1"/>
</dbReference>
<dbReference type="Pfam" id="PF00401">
    <property type="entry name" value="ATP-synt_DE"/>
    <property type="match status" value="1"/>
</dbReference>
<dbReference type="Pfam" id="PF02823">
    <property type="entry name" value="ATP-synt_DE_N"/>
    <property type="match status" value="1"/>
</dbReference>
<dbReference type="SUPFAM" id="SSF46604">
    <property type="entry name" value="Epsilon subunit of F1F0-ATP synthase C-terminal domain"/>
    <property type="match status" value="1"/>
</dbReference>
<dbReference type="SUPFAM" id="SSF51344">
    <property type="entry name" value="Epsilon subunit of F1F0-ATP synthase N-terminal domain"/>
    <property type="match status" value="1"/>
</dbReference>
<name>ATPE_PSESM</name>
<accession>Q87TT5</accession>
<comment type="function">
    <text evidence="1">Produces ATP from ADP in the presence of a proton gradient across the membrane.</text>
</comment>
<comment type="subunit">
    <text>F-type ATPases have 2 components, CF(1) - the catalytic core - and CF(0) - the membrane proton channel. CF(1) has five subunits: alpha(3), beta(3), gamma(1), delta(1), epsilon(1). CF(0) has three main subunits: a, b and c.</text>
</comment>
<comment type="subcellular location">
    <subcellularLocation>
        <location evidence="1">Cell inner membrane</location>
        <topology evidence="1">Peripheral membrane protein</topology>
    </subcellularLocation>
</comment>
<comment type="similarity">
    <text evidence="1">Belongs to the ATPase epsilon chain family.</text>
</comment>
<organism>
    <name type="scientific">Pseudomonas syringae pv. tomato (strain ATCC BAA-871 / DC3000)</name>
    <dbReference type="NCBI Taxonomy" id="223283"/>
    <lineage>
        <taxon>Bacteria</taxon>
        <taxon>Pseudomonadati</taxon>
        <taxon>Pseudomonadota</taxon>
        <taxon>Gammaproteobacteria</taxon>
        <taxon>Pseudomonadales</taxon>
        <taxon>Pseudomonadaceae</taxon>
        <taxon>Pseudomonas</taxon>
    </lineage>
</organism>
<gene>
    <name evidence="1" type="primary">atpC</name>
    <name type="ordered locus">PSPTO_5598</name>
</gene>
<evidence type="ECO:0000255" key="1">
    <source>
        <dbReference type="HAMAP-Rule" id="MF_00530"/>
    </source>
</evidence>
<proteinExistence type="inferred from homology"/>
<reference key="1">
    <citation type="journal article" date="2003" name="Proc. Natl. Acad. Sci. U.S.A.">
        <title>The complete genome sequence of the Arabidopsis and tomato pathogen Pseudomonas syringae pv. tomato DC3000.</title>
        <authorList>
            <person name="Buell C.R."/>
            <person name="Joardar V."/>
            <person name="Lindeberg M."/>
            <person name="Selengut J."/>
            <person name="Paulsen I.T."/>
            <person name="Gwinn M.L."/>
            <person name="Dodson R.J."/>
            <person name="DeBoy R.T."/>
            <person name="Durkin A.S."/>
            <person name="Kolonay J.F."/>
            <person name="Madupu R."/>
            <person name="Daugherty S.C."/>
            <person name="Brinkac L.M."/>
            <person name="Beanan M.J."/>
            <person name="Haft D.H."/>
            <person name="Nelson W.C."/>
            <person name="Davidsen T.M."/>
            <person name="Zafar N."/>
            <person name="Zhou L."/>
            <person name="Liu J."/>
            <person name="Yuan Q."/>
            <person name="Khouri H.M."/>
            <person name="Fedorova N.B."/>
            <person name="Tran B."/>
            <person name="Russell D."/>
            <person name="Berry K.J."/>
            <person name="Utterback T.R."/>
            <person name="Van Aken S.E."/>
            <person name="Feldblyum T.V."/>
            <person name="D'Ascenzo M."/>
            <person name="Deng W.-L."/>
            <person name="Ramos A.R."/>
            <person name="Alfano J.R."/>
            <person name="Cartinhour S."/>
            <person name="Chatterjee A.K."/>
            <person name="Delaney T.P."/>
            <person name="Lazarowitz S.G."/>
            <person name="Martin G.B."/>
            <person name="Schneider D.J."/>
            <person name="Tang X."/>
            <person name="Bender C.L."/>
            <person name="White O."/>
            <person name="Fraser C.M."/>
            <person name="Collmer A."/>
        </authorList>
    </citation>
    <scope>NUCLEOTIDE SEQUENCE [LARGE SCALE GENOMIC DNA]</scope>
    <source>
        <strain>ATCC BAA-871 / DC3000</strain>
    </source>
</reference>
<keyword id="KW-0066">ATP synthesis</keyword>
<keyword id="KW-0997">Cell inner membrane</keyword>
<keyword id="KW-1003">Cell membrane</keyword>
<keyword id="KW-0139">CF(1)</keyword>
<keyword id="KW-0375">Hydrogen ion transport</keyword>
<keyword id="KW-0406">Ion transport</keyword>
<keyword id="KW-0472">Membrane</keyword>
<keyword id="KW-1185">Reference proteome</keyword>
<keyword id="KW-0813">Transport</keyword>